<organism>
    <name type="scientific">Periplaneta americana</name>
    <name type="common">American cockroach</name>
    <name type="synonym">Blatta americana</name>
    <dbReference type="NCBI Taxonomy" id="6978"/>
    <lineage>
        <taxon>Eukaryota</taxon>
        <taxon>Metazoa</taxon>
        <taxon>Ecdysozoa</taxon>
        <taxon>Arthropoda</taxon>
        <taxon>Hexapoda</taxon>
        <taxon>Insecta</taxon>
        <taxon>Pterygota</taxon>
        <taxon>Neoptera</taxon>
        <taxon>Polyneoptera</taxon>
        <taxon>Dictyoptera</taxon>
        <taxon>Blattodea</taxon>
        <taxon>Blattoidea</taxon>
        <taxon>Blattidae</taxon>
        <taxon>Blattinae</taxon>
        <taxon>Periplaneta</taxon>
    </lineage>
</organism>
<sequence>GTVFFDQDSPDSPVKVTGEVTGLQKHGFHIHEFGDNTNMSADGSSYLQVSGSKLTQEGQASMEVKGNAGARVAXGVVGIAK</sequence>
<feature type="chain" id="PRO_0000065024" description="Bursicon">
    <location>
        <begin position="1" status="less than"/>
        <end position="81" status="greater than"/>
    </location>
</feature>
<feature type="non-consecutive residues" evidence="4">
    <location>
        <begin position="25"/>
        <end position="26"/>
    </location>
</feature>
<feature type="non-consecutive residues" evidence="4">
    <location>
        <begin position="38"/>
        <end position="39"/>
    </location>
</feature>
<feature type="non-consecutive residues" evidence="4 5">
    <location>
        <begin position="41"/>
        <end position="42"/>
    </location>
</feature>
<feature type="non-consecutive residues" evidence="4 5">
    <location>
        <begin position="53"/>
        <end position="54"/>
    </location>
</feature>
<feature type="non-consecutive residues" evidence="4 5">
    <location>
        <begin position="65"/>
        <end position="66"/>
    </location>
</feature>
<feature type="non-terminal residue" evidence="4">
    <location>
        <position position="1"/>
    </location>
</feature>
<feature type="non-terminal residue" evidence="4">
    <location>
        <position position="81"/>
    </location>
</feature>
<evidence type="ECO:0000269" key="1">
    <source>
    </source>
</evidence>
<evidence type="ECO:0000269" key="2">
    <source>
    </source>
</evidence>
<evidence type="ECO:0000269" key="3">
    <source>
    </source>
</evidence>
<evidence type="ECO:0000303" key="4">
    <source>
    </source>
</evidence>
<evidence type="ECO:0000303" key="5">
    <source>
    </source>
</evidence>
<evidence type="ECO:0000305" key="6"/>
<reference evidence="6" key="1">
    <citation type="journal article" date="1999" name="Insect Biochem. Mol. Biol.">
        <title>Antisera against Periplaneta americana Cu,Zn-superoxide dismutase (SOD): separation of the neurohormone bursicon from SOD, and immunodetection of SOD in the central nervous system.</title>
        <authorList>
            <person name="Kostron B."/>
            <person name="Market D."/>
            <person name="Kellermann J."/>
            <person name="Carter C.E."/>
            <person name="Honegger H.W."/>
        </authorList>
    </citation>
    <scope>PROTEIN SEQUENCE OF 1-41 AND 66-81</scope>
    <source>
        <tissue evidence="1">Ventral nerve cord</tissue>
    </source>
</reference>
<reference evidence="6" key="2">
    <citation type="journal article" date="2002" name="J. Comp. Neurol.">
        <title>Cellular localization of bursicon using antisera against partial peptide sequences of this insect cuticle-sclerotizing neurohormone.</title>
        <authorList>
            <person name="Honegger H.W."/>
            <person name="Market D."/>
            <person name="Pierce L.A."/>
            <person name="Dewey E.M."/>
            <person name="Kostron B."/>
            <person name="Wilson M."/>
            <person name="Choi D."/>
            <person name="Klukas K.A."/>
            <person name="Mesce K.A."/>
        </authorList>
    </citation>
    <scope>PROTEIN SEQUENCE OF 42-65</scope>
    <scope>FUNCTION</scope>
    <scope>SUBUNIT</scope>
    <scope>SUBCELLULAR LOCATION</scope>
    <scope>TISSUE SPECIFICITY</scope>
    <source>
        <tissue evidence="2">Ventral nerve cord</tissue>
    </source>
</reference>
<reference key="3">
    <citation type="journal article" date="2005" name="Proc. Natl. Acad. Sci. U.S.A.">
        <title>Bursicon, the insect cuticle-hardening hormone, is a heterodimeric cystine knot protein that activates G protein-coupled receptor LGR2.</title>
        <authorList>
            <person name="Luo C.-W."/>
            <person name="Dewey E.M."/>
            <person name="Sudo S."/>
            <person name="Ewer J."/>
            <person name="Hsu S.Y."/>
            <person name="Honegger H.-W."/>
            <person name="Hsueh A.J.W."/>
        </authorList>
    </citation>
    <scope>TISSUE SPECIFICITY</scope>
</reference>
<keyword id="KW-0903">Direct protein sequencing</keyword>
<keyword id="KW-0372">Hormone</keyword>
<keyword id="KW-0964">Secreted</keyword>
<proteinExistence type="evidence at protein level"/>
<protein>
    <recommendedName>
        <fullName>Bursicon</fullName>
    </recommendedName>
    <alternativeName>
        <fullName>Bursicon subunit alpha</fullName>
    </alternativeName>
    <alternativeName>
        <fullName>Cuticle-tanning hormone</fullName>
    </alternativeName>
</protein>
<gene>
    <name type="primary">burs</name>
</gene>
<accession>P84118</accession>
<name>BURS_PERAM</name>
<comment type="function">
    <text evidence="2">Final heterodimeric neurohormone released at the end of the molting cycle, involved in the sclerotization (tanning) of the insect cuticle, melanization and wing spreading.</text>
</comment>
<comment type="subunit">
    <text evidence="2">Heterodimer of burs and pburs.</text>
</comment>
<comment type="subcellular location">
    <subcellularLocation>
        <location evidence="2">Secreted</location>
    </subcellularLocation>
</comment>
<comment type="tissue specificity">
    <text evidence="2 3">Central nervous system. Coexpressed with CCAP in most CCAP-specific neurons. Coexpressed with pburs in the large bilateral lateral neurosecretory neurons of the first three unfused abdominal ganglia and in all anterior bilateral cell pairs in the thoracic ganglia.</text>
</comment>
<comment type="caution">
    <text evidence="6">The order of the 5th peptide within the sequence is unknown.</text>
</comment>
<dbReference type="GO" id="GO:0005576">
    <property type="term" value="C:extracellular region"/>
    <property type="evidence" value="ECO:0000314"/>
    <property type="project" value="UniProtKB"/>
</dbReference>
<dbReference type="GO" id="GO:0005507">
    <property type="term" value="F:copper ion binding"/>
    <property type="evidence" value="ECO:0007669"/>
    <property type="project" value="InterPro"/>
</dbReference>
<dbReference type="GO" id="GO:0005179">
    <property type="term" value="F:hormone activity"/>
    <property type="evidence" value="ECO:0000303"/>
    <property type="project" value="UniProtKB"/>
</dbReference>
<dbReference type="GO" id="GO:0007593">
    <property type="term" value="P:chitin-based cuticle sclerotization"/>
    <property type="evidence" value="ECO:0000303"/>
    <property type="project" value="UniProtKB"/>
</dbReference>
<dbReference type="GO" id="GO:0048067">
    <property type="term" value="P:cuticle pigmentation"/>
    <property type="evidence" value="ECO:0000303"/>
    <property type="project" value="UniProtKB"/>
</dbReference>
<dbReference type="GO" id="GO:0006801">
    <property type="term" value="P:superoxide metabolic process"/>
    <property type="evidence" value="ECO:0007669"/>
    <property type="project" value="InterPro"/>
</dbReference>
<dbReference type="Gene3D" id="2.60.40.200">
    <property type="entry name" value="Superoxide dismutase, copper/zinc binding domain"/>
    <property type="match status" value="1"/>
</dbReference>
<dbReference type="InterPro" id="IPR036423">
    <property type="entry name" value="SOD-like_Cu/Zn_dom_sf"/>
</dbReference>
<dbReference type="InterPro" id="IPR024134">
    <property type="entry name" value="SOD_Cu/Zn_/chaperone"/>
</dbReference>
<dbReference type="InterPro" id="IPR018152">
    <property type="entry name" value="SOD_Cu/Zn_BS"/>
</dbReference>
<dbReference type="InterPro" id="IPR001424">
    <property type="entry name" value="SOD_Cu_Zn_dom"/>
</dbReference>
<dbReference type="PANTHER" id="PTHR10003">
    <property type="entry name" value="SUPEROXIDE DISMUTASE CU-ZN -RELATED"/>
    <property type="match status" value="1"/>
</dbReference>
<dbReference type="Pfam" id="PF00080">
    <property type="entry name" value="Sod_Cu"/>
    <property type="match status" value="1"/>
</dbReference>
<dbReference type="SUPFAM" id="SSF49329">
    <property type="entry name" value="Cu,Zn superoxide dismutase-like"/>
    <property type="match status" value="1"/>
</dbReference>